<protein>
    <recommendedName>
        <fullName evidence="1">5-methylthioadenosine/S-adenosylhomocysteine deaminase</fullName>
        <shortName evidence="1">MTA/SAH deaminase</shortName>
        <ecNumber evidence="1">3.5.4.28</ecNumber>
        <ecNumber evidence="1">3.5.4.31</ecNumber>
    </recommendedName>
</protein>
<reference key="1">
    <citation type="journal article" date="2004" name="Nucleic Acids Res.">
        <title>The genome sequence of Bacillus cereus ATCC 10987 reveals metabolic adaptations and a large plasmid related to Bacillus anthracis pXO1.</title>
        <authorList>
            <person name="Rasko D.A."/>
            <person name="Ravel J."/>
            <person name="Oekstad O.A."/>
            <person name="Helgason E."/>
            <person name="Cer R.Z."/>
            <person name="Jiang L."/>
            <person name="Shores K.A."/>
            <person name="Fouts D.E."/>
            <person name="Tourasse N.J."/>
            <person name="Angiuoli S.V."/>
            <person name="Kolonay J.F."/>
            <person name="Nelson W.C."/>
            <person name="Kolstoe A.-B."/>
            <person name="Fraser C.M."/>
            <person name="Read T.D."/>
        </authorList>
    </citation>
    <scope>NUCLEOTIDE SEQUENCE [LARGE SCALE GENOMIC DNA]</scope>
    <source>
        <strain>ATCC 10987 / NRS 248</strain>
    </source>
</reference>
<reference key="2">
    <citation type="journal article" date="1999" name="Microbiology">
        <title>Genome organization is not conserved between Bacillus cereus and Bacillus subtilis.</title>
        <authorList>
            <person name="Oekstad O.A."/>
            <person name="Hegna I.K."/>
            <person name="Lindbaeck T."/>
            <person name="Rishovd A.-L."/>
            <person name="Kolstoe A.-B."/>
        </authorList>
    </citation>
    <scope>NUCLEOTIDE SEQUENCE [GENOMIC DNA] OF 39-435</scope>
    <source>
        <strain>ATCC 10987 / NRS 248</strain>
    </source>
</reference>
<feature type="chain" id="PRO_0000122305" description="5-methylthioadenosine/S-adenosylhomocysteine deaminase">
    <location>
        <begin position="1"/>
        <end position="435"/>
    </location>
</feature>
<feature type="binding site" evidence="1">
    <location>
        <position position="65"/>
    </location>
    <ligand>
        <name>Zn(2+)</name>
        <dbReference type="ChEBI" id="CHEBI:29105"/>
    </ligand>
</feature>
<feature type="binding site" evidence="1">
    <location>
        <position position="67"/>
    </location>
    <ligand>
        <name>Zn(2+)</name>
        <dbReference type="ChEBI" id="CHEBI:29105"/>
    </ligand>
</feature>
<feature type="binding site" evidence="1">
    <location>
        <position position="94"/>
    </location>
    <ligand>
        <name>substrate</name>
    </ligand>
</feature>
<feature type="binding site" evidence="1">
    <location>
        <position position="150"/>
    </location>
    <ligand>
        <name>substrate</name>
    </ligand>
</feature>
<feature type="binding site" evidence="1">
    <location>
        <position position="189"/>
    </location>
    <ligand>
        <name>substrate</name>
    </ligand>
</feature>
<feature type="binding site" evidence="1">
    <location>
        <position position="216"/>
    </location>
    <ligand>
        <name>Zn(2+)</name>
        <dbReference type="ChEBI" id="CHEBI:29105"/>
    </ligand>
</feature>
<feature type="binding site" evidence="1">
    <location>
        <position position="219"/>
    </location>
    <ligand>
        <name>substrate</name>
    </ligand>
</feature>
<feature type="binding site" evidence="1">
    <location>
        <position position="304"/>
    </location>
    <ligand>
        <name>substrate</name>
    </ligand>
</feature>
<feature type="binding site" evidence="1">
    <location>
        <position position="304"/>
    </location>
    <ligand>
        <name>Zn(2+)</name>
        <dbReference type="ChEBI" id="CHEBI:29105"/>
    </ligand>
</feature>
<organism>
    <name type="scientific">Bacillus cereus (strain ATCC 10987 / NRS 248)</name>
    <dbReference type="NCBI Taxonomy" id="222523"/>
    <lineage>
        <taxon>Bacteria</taxon>
        <taxon>Bacillati</taxon>
        <taxon>Bacillota</taxon>
        <taxon>Bacilli</taxon>
        <taxon>Bacillales</taxon>
        <taxon>Bacillaceae</taxon>
        <taxon>Bacillus</taxon>
        <taxon>Bacillus cereus group</taxon>
    </lineage>
</organism>
<comment type="function">
    <text evidence="1">Catalyzes the deamination of 5-methylthioadenosine and S-adenosyl-L-homocysteine into 5-methylthioinosine and S-inosyl-L-homocysteine, respectively. Is also able to deaminate adenosine.</text>
</comment>
<comment type="catalytic activity">
    <reaction evidence="1">
        <text>S-adenosyl-L-homocysteine + H2O + H(+) = S-inosyl-L-homocysteine + NH4(+)</text>
        <dbReference type="Rhea" id="RHEA:20716"/>
        <dbReference type="ChEBI" id="CHEBI:15377"/>
        <dbReference type="ChEBI" id="CHEBI:15378"/>
        <dbReference type="ChEBI" id="CHEBI:28938"/>
        <dbReference type="ChEBI" id="CHEBI:57856"/>
        <dbReference type="ChEBI" id="CHEBI:57985"/>
        <dbReference type="EC" id="3.5.4.28"/>
    </reaction>
</comment>
<comment type="catalytic activity">
    <reaction evidence="1">
        <text>S-methyl-5'-thioadenosine + H2O + H(+) = S-methyl-5'-thioinosine + NH4(+)</text>
        <dbReference type="Rhea" id="RHEA:25025"/>
        <dbReference type="ChEBI" id="CHEBI:15377"/>
        <dbReference type="ChEBI" id="CHEBI:15378"/>
        <dbReference type="ChEBI" id="CHEBI:17509"/>
        <dbReference type="ChEBI" id="CHEBI:28938"/>
        <dbReference type="ChEBI" id="CHEBI:48595"/>
        <dbReference type="EC" id="3.5.4.31"/>
    </reaction>
</comment>
<comment type="cofactor">
    <cofactor evidence="1">
        <name>Zn(2+)</name>
        <dbReference type="ChEBI" id="CHEBI:29105"/>
    </cofactor>
    <text evidence="1">Binds 1 zinc ion per subunit.</text>
</comment>
<comment type="similarity">
    <text evidence="1">Belongs to the metallo-dependent hydrolases superfamily. MTA/SAH deaminase family.</text>
</comment>
<comment type="sequence caution" evidence="2">
    <conflict type="erroneous initiation">
        <sequence resource="EMBL-CDS" id="AAS40875"/>
    </conflict>
    <text>Truncated N-terminus.</text>
</comment>
<comment type="sequence caution" evidence="2">
    <conflict type="frameshift">
        <sequence resource="EMBL-CDS" id="CAA72025"/>
    </conflict>
</comment>
<sequence length="435" mass="48157">MKTTYVNATIVTMNEQNEVIENGYIIVENDQIIDVKSGEFANDFEVDEVIDMKGKWVLPGLVNTHTHVVMSLLRGIGDDMLLQPWLETRIWPLESQFTPELAVASTELGLLEMVKSGTTSFSDMFNPIGVDQDAIMETVSRSGMRAAVSRTLFSFGTKDDEKKAIEEAEKYVKRYYNESGMLTTMVAPHSPYTCSTELLEECARIAVENQTMVHIHLSETEREVRDIEAQYGKRPVEYAASCGLFKRPTVIAHGVVLNENERAFLAEHDVRVAHNPNSNLKLGSGIANVKAMLEAGMKVGIATDSVASNNNLDMFEEMRIATLLQKGIHQDATALPVETALTLATKGAAEVIGMKQTGSLEVGKCADFITIDPSNKPHLQPADEVLSHLVYAASGKDISDVIINGKRVVWNGECKTLDEERIIFEASRYKRGLQR</sequence>
<name>MTAD_BACC1</name>
<accession>O31352</accession>
<dbReference type="EC" id="3.5.4.28" evidence="1"/>
<dbReference type="EC" id="3.5.4.31" evidence="1"/>
<dbReference type="EMBL" id="AE017194">
    <property type="protein sequence ID" value="AAS40875.1"/>
    <property type="status" value="ALT_INIT"/>
    <property type="molecule type" value="Genomic_DNA"/>
</dbReference>
<dbReference type="EMBL" id="Y11139">
    <property type="protein sequence ID" value="CAA72025.1"/>
    <property type="status" value="ALT_FRAME"/>
    <property type="molecule type" value="Genomic_DNA"/>
</dbReference>
<dbReference type="PIR" id="T44621">
    <property type="entry name" value="T44621"/>
</dbReference>
<dbReference type="SMR" id="O31352"/>
<dbReference type="KEGG" id="bca:BCE_1951"/>
<dbReference type="HOGENOM" id="CLU_012358_2_0_9"/>
<dbReference type="Proteomes" id="UP000002527">
    <property type="component" value="Chromosome"/>
</dbReference>
<dbReference type="GO" id="GO:0090614">
    <property type="term" value="F:5'-methylthioadenosine deaminase activity"/>
    <property type="evidence" value="ECO:0007669"/>
    <property type="project" value="UniProtKB-UniRule"/>
</dbReference>
<dbReference type="GO" id="GO:0046872">
    <property type="term" value="F:metal ion binding"/>
    <property type="evidence" value="ECO:0007669"/>
    <property type="project" value="UniProtKB-KW"/>
</dbReference>
<dbReference type="GO" id="GO:0050270">
    <property type="term" value="F:S-adenosylhomocysteine deaminase activity"/>
    <property type="evidence" value="ECO:0007669"/>
    <property type="project" value="UniProtKB-UniRule"/>
</dbReference>
<dbReference type="CDD" id="cd01298">
    <property type="entry name" value="ATZ_TRZ_like"/>
    <property type="match status" value="1"/>
</dbReference>
<dbReference type="FunFam" id="3.20.20.140:FF:000014">
    <property type="entry name" value="5-methylthioadenosine/S-adenosylhomocysteine deaminase"/>
    <property type="match status" value="1"/>
</dbReference>
<dbReference type="Gene3D" id="3.20.20.140">
    <property type="entry name" value="Metal-dependent hydrolases"/>
    <property type="match status" value="1"/>
</dbReference>
<dbReference type="Gene3D" id="2.30.40.10">
    <property type="entry name" value="Urease, subunit C, domain 1"/>
    <property type="match status" value="1"/>
</dbReference>
<dbReference type="HAMAP" id="MF_01281">
    <property type="entry name" value="MTA_SAH_deamin"/>
    <property type="match status" value="1"/>
</dbReference>
<dbReference type="InterPro" id="IPR006680">
    <property type="entry name" value="Amidohydro-rel"/>
</dbReference>
<dbReference type="InterPro" id="IPR023512">
    <property type="entry name" value="Deaminase_MtaD/DadD"/>
</dbReference>
<dbReference type="InterPro" id="IPR011059">
    <property type="entry name" value="Metal-dep_hydrolase_composite"/>
</dbReference>
<dbReference type="InterPro" id="IPR032466">
    <property type="entry name" value="Metal_Hydrolase"/>
</dbReference>
<dbReference type="InterPro" id="IPR050287">
    <property type="entry name" value="MTA/SAH_deaminase"/>
</dbReference>
<dbReference type="NCBIfam" id="NF012037">
    <property type="entry name" value="PRK15493.1"/>
    <property type="match status" value="1"/>
</dbReference>
<dbReference type="PANTHER" id="PTHR43794:SF11">
    <property type="entry name" value="AMIDOHYDROLASE-RELATED DOMAIN-CONTAINING PROTEIN"/>
    <property type="match status" value="1"/>
</dbReference>
<dbReference type="PANTHER" id="PTHR43794">
    <property type="entry name" value="AMINOHYDROLASE SSNA-RELATED"/>
    <property type="match status" value="1"/>
</dbReference>
<dbReference type="Pfam" id="PF01979">
    <property type="entry name" value="Amidohydro_1"/>
    <property type="match status" value="1"/>
</dbReference>
<dbReference type="SUPFAM" id="SSF51338">
    <property type="entry name" value="Composite domain of metallo-dependent hydrolases"/>
    <property type="match status" value="1"/>
</dbReference>
<dbReference type="SUPFAM" id="SSF51556">
    <property type="entry name" value="Metallo-dependent hydrolases"/>
    <property type="match status" value="1"/>
</dbReference>
<gene>
    <name evidence="1" type="primary">mtaD</name>
    <name type="ordered locus">BCE_1951</name>
</gene>
<keyword id="KW-0378">Hydrolase</keyword>
<keyword id="KW-0479">Metal-binding</keyword>
<keyword id="KW-0862">Zinc</keyword>
<proteinExistence type="inferred from homology"/>
<evidence type="ECO:0000255" key="1">
    <source>
        <dbReference type="HAMAP-Rule" id="MF_01281"/>
    </source>
</evidence>
<evidence type="ECO:0000305" key="2"/>